<organism>
    <name type="scientific">Sus scrofa</name>
    <name type="common">Pig</name>
    <dbReference type="NCBI Taxonomy" id="9823"/>
    <lineage>
        <taxon>Eukaryota</taxon>
        <taxon>Metazoa</taxon>
        <taxon>Chordata</taxon>
        <taxon>Craniata</taxon>
        <taxon>Vertebrata</taxon>
        <taxon>Euteleostomi</taxon>
        <taxon>Mammalia</taxon>
        <taxon>Eutheria</taxon>
        <taxon>Laurasiatheria</taxon>
        <taxon>Artiodactyla</taxon>
        <taxon>Suina</taxon>
        <taxon>Suidae</taxon>
        <taxon>Sus</taxon>
    </lineage>
</organism>
<reference key="1">
    <citation type="journal article" date="1996" name="Mamm. Genome">
        <title>Evaluation and characterization of a porcine small intestine cDNA library: analysis of 839 clones.</title>
        <authorList>
            <person name="Winteroe A.K."/>
            <person name="Fredholm M."/>
            <person name="Davies W."/>
        </authorList>
    </citation>
    <scope>NUCLEOTIDE SEQUENCE [LARGE SCALE MRNA]</scope>
    <source>
        <tissue>Small intestine</tissue>
    </source>
</reference>
<gene>
    <name type="primary">CCT6</name>
    <name type="synonym">CCTZ</name>
</gene>
<name>TCPZ_PIG</name>
<accession>Q29236</accession>
<comment type="function">
    <text evidence="1">Component of the chaperonin-containing T-complex (TRiC), a molecular chaperone complex that assists the folding of actin, tubulin and other proteins upon ATP hydrolysis. The TRiC complex mediates the folding of WRAP53/TCAB1, thereby regulating telomere maintenance.</text>
</comment>
<comment type="catalytic activity">
    <reaction evidence="1">
        <text>ATP + H2O = ADP + phosphate + H(+)</text>
        <dbReference type="Rhea" id="RHEA:13065"/>
        <dbReference type="ChEBI" id="CHEBI:15377"/>
        <dbReference type="ChEBI" id="CHEBI:15378"/>
        <dbReference type="ChEBI" id="CHEBI:30616"/>
        <dbReference type="ChEBI" id="CHEBI:43474"/>
        <dbReference type="ChEBI" id="CHEBI:456216"/>
    </reaction>
</comment>
<comment type="subunit">
    <text evidence="1">Component of the chaperonin-containing T-complex (TRiC), a hexadecamer composed of two identical back-to-back stacked rings enclosing a protein folding chamber. Each ring is made up of eight different subunits: TCP1/CCT1, CCT2, CCT3, CCT4, CCT5, CCT6A/CCT6, CCT7, CCT8. Interacts with PACRG.</text>
</comment>
<comment type="subcellular location">
    <subcellularLocation>
        <location>Cytoplasm</location>
    </subcellularLocation>
</comment>
<comment type="similarity">
    <text evidence="2">Belongs to the TCP-1 chaperonin family.</text>
</comment>
<proteinExistence type="evidence at transcript level"/>
<keyword id="KW-0067">ATP-binding</keyword>
<keyword id="KW-0143">Chaperone</keyword>
<keyword id="KW-0963">Cytoplasm</keyword>
<keyword id="KW-0378">Hydrolase</keyword>
<keyword id="KW-0460">Magnesium</keyword>
<keyword id="KW-0479">Metal-binding</keyword>
<keyword id="KW-0547">Nucleotide-binding</keyword>
<keyword id="KW-1185">Reference proteome</keyword>
<feature type="chain" id="PRO_0000128357" description="T-complex protein 1 subunit zeta">
    <location>
        <begin position="1" status="less than"/>
        <end position="104" status="greater than"/>
    </location>
</feature>
<feature type="binding site" evidence="1">
    <location>
        <position position="24"/>
    </location>
    <ligand>
        <name>ADP</name>
        <dbReference type="ChEBI" id="CHEBI:456216"/>
    </ligand>
</feature>
<feature type="binding site" evidence="1">
    <location>
        <position position="24"/>
    </location>
    <ligand>
        <name>ATP</name>
        <dbReference type="ChEBI" id="CHEBI:30616"/>
    </ligand>
</feature>
<feature type="binding site" evidence="1">
    <location>
        <position position="75"/>
    </location>
    <ligand>
        <name>Mg(2+)</name>
        <dbReference type="ChEBI" id="CHEBI:18420"/>
    </ligand>
</feature>
<feature type="binding site" evidence="1">
    <location>
        <position position="76"/>
    </location>
    <ligand>
        <name>ADP</name>
        <dbReference type="ChEBI" id="CHEBI:456216"/>
    </ligand>
</feature>
<feature type="binding site" evidence="1">
    <location>
        <position position="76"/>
    </location>
    <ligand>
        <name>ATP</name>
        <dbReference type="ChEBI" id="CHEBI:30616"/>
    </ligand>
</feature>
<feature type="binding site" evidence="1">
    <location>
        <position position="78"/>
    </location>
    <ligand>
        <name>ADP</name>
        <dbReference type="ChEBI" id="CHEBI:456216"/>
    </ligand>
</feature>
<feature type="binding site" evidence="1">
    <location>
        <position position="78"/>
    </location>
    <ligand>
        <name>ATP</name>
        <dbReference type="ChEBI" id="CHEBI:30616"/>
    </ligand>
</feature>
<feature type="binding site" evidence="1">
    <location>
        <position position="79"/>
    </location>
    <ligand>
        <name>ADP</name>
        <dbReference type="ChEBI" id="CHEBI:456216"/>
    </ligand>
</feature>
<feature type="non-terminal residue">
    <location>
        <position position="1"/>
    </location>
</feature>
<feature type="non-terminal residue">
    <location>
        <position position="104"/>
    </location>
</feature>
<protein>
    <recommendedName>
        <fullName>T-complex protein 1 subunit zeta</fullName>
        <shortName>TCP-1-zeta</shortName>
        <ecNumber evidence="1">3.6.1.-</ecNumber>
    </recommendedName>
    <alternativeName>
        <fullName>CCT-zeta</fullName>
    </alternativeName>
</protein>
<sequence>SQAALAVNISAARGLQDVLRTNLGPKGTMKMLVSGAGDIKLTKDGNVLLHEMQIQHPTASLIAKVATAQDDITGDGXTSNVLIIGELLKQADLYISEGLHPRII</sequence>
<evidence type="ECO:0000250" key="1">
    <source>
        <dbReference type="UniProtKB" id="P40227"/>
    </source>
</evidence>
<evidence type="ECO:0000305" key="2"/>
<dbReference type="EC" id="3.6.1.-" evidence="1"/>
<dbReference type="EMBL" id="F14833">
    <property type="protein sequence ID" value="CAA23284.1"/>
    <property type="molecule type" value="mRNA"/>
</dbReference>
<dbReference type="STRING" id="9823.ENSSSCP00000020707"/>
<dbReference type="PaxDb" id="9823-ENSSSCP00000008274"/>
<dbReference type="PeptideAtlas" id="Q29236"/>
<dbReference type="eggNOG" id="KOG0359">
    <property type="taxonomic scope" value="Eukaryota"/>
</dbReference>
<dbReference type="InParanoid" id="Q29236"/>
<dbReference type="Proteomes" id="UP000008227">
    <property type="component" value="Unplaced"/>
</dbReference>
<dbReference type="Proteomes" id="UP000314985">
    <property type="component" value="Unplaced"/>
</dbReference>
<dbReference type="Proteomes" id="UP000694570">
    <property type="component" value="Unplaced"/>
</dbReference>
<dbReference type="Proteomes" id="UP000694571">
    <property type="component" value="Unplaced"/>
</dbReference>
<dbReference type="Proteomes" id="UP000694720">
    <property type="component" value="Unplaced"/>
</dbReference>
<dbReference type="Proteomes" id="UP000694722">
    <property type="component" value="Unplaced"/>
</dbReference>
<dbReference type="Proteomes" id="UP000694723">
    <property type="component" value="Unplaced"/>
</dbReference>
<dbReference type="Proteomes" id="UP000694724">
    <property type="component" value="Unplaced"/>
</dbReference>
<dbReference type="Proteomes" id="UP000694725">
    <property type="component" value="Unplaced"/>
</dbReference>
<dbReference type="Proteomes" id="UP000694726">
    <property type="component" value="Unplaced"/>
</dbReference>
<dbReference type="Proteomes" id="UP000694727">
    <property type="component" value="Unplaced"/>
</dbReference>
<dbReference type="Proteomes" id="UP000694728">
    <property type="component" value="Unplaced"/>
</dbReference>
<dbReference type="GO" id="GO:0005832">
    <property type="term" value="C:chaperonin-containing T-complex"/>
    <property type="evidence" value="ECO:0000250"/>
    <property type="project" value="UniProtKB"/>
</dbReference>
<dbReference type="GO" id="GO:0005524">
    <property type="term" value="F:ATP binding"/>
    <property type="evidence" value="ECO:0007669"/>
    <property type="project" value="UniProtKB-KW"/>
</dbReference>
<dbReference type="GO" id="GO:0016887">
    <property type="term" value="F:ATP hydrolysis activity"/>
    <property type="evidence" value="ECO:0007669"/>
    <property type="project" value="InterPro"/>
</dbReference>
<dbReference type="GO" id="GO:0140662">
    <property type="term" value="F:ATP-dependent protein folding chaperone"/>
    <property type="evidence" value="ECO:0007669"/>
    <property type="project" value="InterPro"/>
</dbReference>
<dbReference type="GO" id="GO:0051082">
    <property type="term" value="F:unfolded protein binding"/>
    <property type="evidence" value="ECO:0007669"/>
    <property type="project" value="InterPro"/>
</dbReference>
<dbReference type="FunFam" id="1.10.560.10:FF:000058">
    <property type="entry name" value="T-complex protein 1 subunit zeta"/>
    <property type="match status" value="1"/>
</dbReference>
<dbReference type="Gene3D" id="1.10.560.10">
    <property type="entry name" value="GroEL-like equatorial domain"/>
    <property type="match status" value="1"/>
</dbReference>
<dbReference type="InterPro" id="IPR017998">
    <property type="entry name" value="Chaperone_TCP-1"/>
</dbReference>
<dbReference type="InterPro" id="IPR002194">
    <property type="entry name" value="Chaperonin_TCP-1_CS"/>
</dbReference>
<dbReference type="InterPro" id="IPR002423">
    <property type="entry name" value="Cpn60/GroEL/TCP-1"/>
</dbReference>
<dbReference type="InterPro" id="IPR027413">
    <property type="entry name" value="GROEL-like_equatorial_sf"/>
</dbReference>
<dbReference type="PANTHER" id="PTHR11353">
    <property type="entry name" value="CHAPERONIN"/>
    <property type="match status" value="1"/>
</dbReference>
<dbReference type="Pfam" id="PF00118">
    <property type="entry name" value="Cpn60_TCP1"/>
    <property type="match status" value="1"/>
</dbReference>
<dbReference type="PRINTS" id="PR00304">
    <property type="entry name" value="TCOMPLEXTCP1"/>
</dbReference>
<dbReference type="SUPFAM" id="SSF48592">
    <property type="entry name" value="GroEL equatorial domain-like"/>
    <property type="match status" value="1"/>
</dbReference>
<dbReference type="PROSITE" id="PS00750">
    <property type="entry name" value="TCP1_1"/>
    <property type="match status" value="1"/>
</dbReference>
<dbReference type="PROSITE" id="PS00751">
    <property type="entry name" value="TCP1_2"/>
    <property type="match status" value="1"/>
</dbReference>
<dbReference type="PROSITE" id="PS00995">
    <property type="entry name" value="TCP1_3"/>
    <property type="match status" value="1"/>
</dbReference>